<protein>
    <recommendedName>
        <fullName>Protein AIR2</fullName>
    </recommendedName>
    <alternativeName>
        <fullName>Arginine methyltransferase-interacting RING finger protein 2</fullName>
    </alternativeName>
</protein>
<feature type="chain" id="PRO_0000227604" description="Protein AIR2">
    <location>
        <begin position="1"/>
        <end position="344"/>
    </location>
</feature>
<feature type="zinc finger region" description="CCHC-type 1" evidence="1">
    <location>
        <begin position="61"/>
        <end position="78"/>
    </location>
</feature>
<feature type="zinc finger region" description="CCHC-type 2" evidence="1">
    <location>
        <begin position="99"/>
        <end position="116"/>
    </location>
</feature>
<feature type="zinc finger region" description="CCHC-type 3" evidence="1">
    <location>
        <begin position="162"/>
        <end position="179"/>
    </location>
</feature>
<feature type="region of interest" description="Disordered" evidence="2">
    <location>
        <begin position="1"/>
        <end position="23"/>
    </location>
</feature>
<feature type="region of interest" description="Disordered" evidence="2">
    <location>
        <begin position="227"/>
        <end position="274"/>
    </location>
</feature>
<feature type="region of interest" description="Disordered" evidence="2">
    <location>
        <begin position="312"/>
        <end position="344"/>
    </location>
</feature>
<feature type="compositionally biased region" description="Low complexity" evidence="2">
    <location>
        <begin position="317"/>
        <end position="337"/>
    </location>
</feature>
<feature type="modified residue" description="Phosphoserine" evidence="12">
    <location>
        <position position="31"/>
    </location>
</feature>
<feature type="modified residue" description="Phosphoserine" evidence="11 12 13">
    <location>
        <position position="49"/>
    </location>
</feature>
<feature type="strand" evidence="16">
    <location>
        <begin position="19"/>
        <end position="22"/>
    </location>
</feature>
<feature type="helix" evidence="16">
    <location>
        <begin position="26"/>
        <end position="28"/>
    </location>
</feature>
<feature type="helix" evidence="16">
    <location>
        <begin position="33"/>
        <end position="35"/>
    </location>
</feature>
<feature type="helix" evidence="16">
    <location>
        <begin position="36"/>
        <end position="40"/>
    </location>
</feature>
<feature type="strand" evidence="14">
    <location>
        <begin position="67"/>
        <end position="70"/>
    </location>
</feature>
<feature type="turn" evidence="14">
    <location>
        <begin position="73"/>
        <end position="77"/>
    </location>
</feature>
<feature type="turn" evidence="14">
    <location>
        <begin position="82"/>
        <end position="84"/>
    </location>
</feature>
<feature type="turn" evidence="14">
    <location>
        <begin position="87"/>
        <end position="89"/>
    </location>
</feature>
<feature type="turn" evidence="14">
    <location>
        <begin position="92"/>
        <end position="94"/>
    </location>
</feature>
<feature type="helix" evidence="14">
    <location>
        <begin position="95"/>
        <end position="97"/>
    </location>
</feature>
<feature type="strand" evidence="14">
    <location>
        <begin position="101"/>
        <end position="105"/>
    </location>
</feature>
<feature type="strand" evidence="14">
    <location>
        <begin position="107"/>
        <end position="110"/>
    </location>
</feature>
<feature type="turn" evidence="14">
    <location>
        <begin position="111"/>
        <end position="113"/>
    </location>
</feature>
<feature type="strand" evidence="15">
    <location>
        <begin position="124"/>
        <end position="126"/>
    </location>
</feature>
<feature type="strand" evidence="15">
    <location>
        <begin position="129"/>
        <end position="131"/>
    </location>
</feature>
<feature type="helix" evidence="15">
    <location>
        <begin position="133"/>
        <end position="135"/>
    </location>
</feature>
<feature type="helix" evidence="15">
    <location>
        <begin position="137"/>
        <end position="139"/>
    </location>
</feature>
<feature type="strand" evidence="14">
    <location>
        <begin position="145"/>
        <end position="147"/>
    </location>
</feature>
<feature type="strand" evidence="15">
    <location>
        <begin position="165"/>
        <end position="168"/>
    </location>
</feature>
<feature type="strand" evidence="15">
    <location>
        <begin position="170"/>
        <end position="172"/>
    </location>
</feature>
<feature type="helix" evidence="15">
    <location>
        <begin position="174"/>
        <end position="176"/>
    </location>
</feature>
<sequence>MEKNTAPFVVDTAPTTPPDKLVAPSIEEVNSNPNELRALRGQGRYFGVSDDDKDAIKEAAPKCNNCSQRGHLKKDCPHIICSYCGATDDHYSRHCPKAIQCSKCDEVGHYRSQCPHKWKKVQCTLCKSKKHSKERCPSIWRAYILVDDNEKAKPKVLPFHTIYCYNCGGKGHFGDDCKEKRSSRVPNEDGSAFTGSNLSVELKQEYYRHMNRNSDENEDYQFSESIYDEDPLPRPSHKRHSQNDHSHSGRNKRRASNFHPPPYQKSNVIQPTIRGETLSLNNNISKNSRYQNTKVNVSSISENMYGSRYNPSTYVDNNSISNSSNYRNYNSYQPYRSGTLGKRR</sequence>
<evidence type="ECO:0000255" key="1">
    <source>
        <dbReference type="PROSITE-ProRule" id="PRU00047"/>
    </source>
</evidence>
<evidence type="ECO:0000256" key="2">
    <source>
        <dbReference type="SAM" id="MobiDB-lite"/>
    </source>
</evidence>
<evidence type="ECO:0000269" key="3">
    <source>
    </source>
</evidence>
<evidence type="ECO:0000269" key="4">
    <source>
    </source>
</evidence>
<evidence type="ECO:0000269" key="5">
    <source>
    </source>
</evidence>
<evidence type="ECO:0000269" key="6">
    <source>
    </source>
</evidence>
<evidence type="ECO:0000269" key="7">
    <source>
    </source>
</evidence>
<evidence type="ECO:0000269" key="8">
    <source>
    </source>
</evidence>
<evidence type="ECO:0000269" key="9">
    <source>
    </source>
</evidence>
<evidence type="ECO:0000305" key="10"/>
<evidence type="ECO:0007744" key="11">
    <source>
    </source>
</evidence>
<evidence type="ECO:0007744" key="12">
    <source>
    </source>
</evidence>
<evidence type="ECO:0007744" key="13">
    <source>
    </source>
</evidence>
<evidence type="ECO:0007829" key="14">
    <source>
        <dbReference type="PDB" id="2LLI"/>
    </source>
</evidence>
<evidence type="ECO:0007829" key="15">
    <source>
        <dbReference type="PDB" id="3NYB"/>
    </source>
</evidence>
<evidence type="ECO:0007829" key="16">
    <source>
        <dbReference type="PDB" id="4U4C"/>
    </source>
</evidence>
<organism>
    <name type="scientific">Saccharomyces cerevisiae (strain ATCC 204508 / S288c)</name>
    <name type="common">Baker's yeast</name>
    <dbReference type="NCBI Taxonomy" id="559292"/>
    <lineage>
        <taxon>Eukaryota</taxon>
        <taxon>Fungi</taxon>
        <taxon>Dikarya</taxon>
        <taxon>Ascomycota</taxon>
        <taxon>Saccharomycotina</taxon>
        <taxon>Saccharomycetes</taxon>
        <taxon>Saccharomycetales</taxon>
        <taxon>Saccharomycetaceae</taxon>
        <taxon>Saccharomyces</taxon>
    </lineage>
</organism>
<dbReference type="EMBL" id="Z74223">
    <property type="protein sequence ID" value="CAA98749.1"/>
    <property type="molecule type" value="Genomic_DNA"/>
</dbReference>
<dbReference type="EMBL" id="Z67750">
    <property type="protein sequence ID" value="CAA91570.1"/>
    <property type="molecule type" value="Genomic_DNA"/>
</dbReference>
<dbReference type="EMBL" id="BK006938">
    <property type="protein sequence ID" value="DAA11687.1"/>
    <property type="molecule type" value="Genomic_DNA"/>
</dbReference>
<dbReference type="PIR" id="S61037">
    <property type="entry name" value="S61037"/>
</dbReference>
<dbReference type="RefSeq" id="NP_010106.1">
    <property type="nucleotide sequence ID" value="NM_001180235.1"/>
</dbReference>
<dbReference type="PDB" id="2LLI">
    <property type="method" value="NMR"/>
    <property type="chains" value="A=57-180"/>
</dbReference>
<dbReference type="PDB" id="3NYB">
    <property type="method" value="X-ray"/>
    <property type="resolution" value="2.70 A"/>
    <property type="chains" value="B=118-198"/>
</dbReference>
<dbReference type="PDB" id="4U4C">
    <property type="method" value="X-ray"/>
    <property type="resolution" value="2.40 A"/>
    <property type="chains" value="B=1-62"/>
</dbReference>
<dbReference type="PDBsum" id="2LLI"/>
<dbReference type="PDBsum" id="3NYB"/>
<dbReference type="PDBsum" id="4U4C"/>
<dbReference type="BMRB" id="Q12476"/>
<dbReference type="SMR" id="Q12476"/>
<dbReference type="BioGRID" id="31891">
    <property type="interactions" value="192"/>
</dbReference>
<dbReference type="ComplexPortal" id="CPX-1679">
    <property type="entry name" value="TRAMP complex variant 4-2"/>
</dbReference>
<dbReference type="DIP" id="DIP-2543N"/>
<dbReference type="ELM" id="Q12476"/>
<dbReference type="FunCoup" id="Q12476">
    <property type="interactions" value="267"/>
</dbReference>
<dbReference type="IntAct" id="Q12476">
    <property type="interactions" value="29"/>
</dbReference>
<dbReference type="MINT" id="Q12476"/>
<dbReference type="STRING" id="4932.YDL175C"/>
<dbReference type="iPTMnet" id="Q12476"/>
<dbReference type="PaxDb" id="4932-YDL175C"/>
<dbReference type="PeptideAtlas" id="Q12476"/>
<dbReference type="EnsemblFungi" id="YDL175C_mRNA">
    <property type="protein sequence ID" value="YDL175C"/>
    <property type="gene ID" value="YDL175C"/>
</dbReference>
<dbReference type="GeneID" id="851379"/>
<dbReference type="KEGG" id="sce:YDL175C"/>
<dbReference type="AGR" id="SGD:S000002334"/>
<dbReference type="SGD" id="S000002334">
    <property type="gene designation" value="AIR2"/>
</dbReference>
<dbReference type="VEuPathDB" id="FungiDB:YDL175C"/>
<dbReference type="eggNOG" id="KOG4400">
    <property type="taxonomic scope" value="Eukaryota"/>
</dbReference>
<dbReference type="HOGENOM" id="CLU_049076_1_0_1"/>
<dbReference type="InParanoid" id="Q12476"/>
<dbReference type="OMA" id="NNQDRHQ"/>
<dbReference type="OrthoDB" id="7608935at2759"/>
<dbReference type="BioCyc" id="YEAST:G3O-29563-MONOMER"/>
<dbReference type="BioGRID-ORCS" id="851379">
    <property type="hits" value="0 hits in 10 CRISPR screens"/>
</dbReference>
<dbReference type="EvolutionaryTrace" id="Q12476"/>
<dbReference type="PRO" id="PR:Q12476"/>
<dbReference type="Proteomes" id="UP000002311">
    <property type="component" value="Chromosome IV"/>
</dbReference>
<dbReference type="RNAct" id="Q12476">
    <property type="molecule type" value="protein"/>
</dbReference>
<dbReference type="GO" id="GO:0005730">
    <property type="term" value="C:nucleolus"/>
    <property type="evidence" value="ECO:0000314"/>
    <property type="project" value="SGD"/>
</dbReference>
<dbReference type="GO" id="GO:0031499">
    <property type="term" value="C:TRAMP complex"/>
    <property type="evidence" value="ECO:0000314"/>
    <property type="project" value="SGD"/>
</dbReference>
<dbReference type="GO" id="GO:0060090">
    <property type="term" value="F:molecular adaptor activity"/>
    <property type="evidence" value="ECO:0000269"/>
    <property type="project" value="DisProt"/>
</dbReference>
<dbReference type="GO" id="GO:0030674">
    <property type="term" value="F:protein-macromolecule adaptor activity"/>
    <property type="evidence" value="ECO:0000315"/>
    <property type="project" value="SGD"/>
</dbReference>
<dbReference type="GO" id="GO:0003723">
    <property type="term" value="F:RNA binding"/>
    <property type="evidence" value="ECO:0000314"/>
    <property type="project" value="SGD"/>
</dbReference>
<dbReference type="GO" id="GO:0008270">
    <property type="term" value="F:zinc ion binding"/>
    <property type="evidence" value="ECO:0007669"/>
    <property type="project" value="UniProtKB-KW"/>
</dbReference>
<dbReference type="GO" id="GO:0071031">
    <property type="term" value="P:nuclear mRNA surveillance of mRNA 3'-end processing"/>
    <property type="evidence" value="ECO:0000316"/>
    <property type="project" value="SGD"/>
</dbReference>
<dbReference type="GO" id="GO:0071039">
    <property type="term" value="P:nuclear polyadenylation-dependent CUT catabolic process"/>
    <property type="evidence" value="ECO:0000316"/>
    <property type="project" value="SGD"/>
</dbReference>
<dbReference type="GO" id="GO:0071035">
    <property type="term" value="P:nuclear polyadenylation-dependent rRNA catabolic process"/>
    <property type="evidence" value="ECO:0000316"/>
    <property type="project" value="SGD"/>
</dbReference>
<dbReference type="GO" id="GO:0071036">
    <property type="term" value="P:nuclear polyadenylation-dependent snoRNA catabolic process"/>
    <property type="evidence" value="ECO:0000316"/>
    <property type="project" value="SGD"/>
</dbReference>
<dbReference type="GO" id="GO:0071037">
    <property type="term" value="P:nuclear polyadenylation-dependent snRNA catabolic process"/>
    <property type="evidence" value="ECO:0000316"/>
    <property type="project" value="SGD"/>
</dbReference>
<dbReference type="GO" id="GO:0043633">
    <property type="term" value="P:polyadenylation-dependent RNA catabolic process"/>
    <property type="evidence" value="ECO:0007669"/>
    <property type="project" value="InterPro"/>
</dbReference>
<dbReference type="GO" id="GO:0000292">
    <property type="term" value="P:RNA fragment catabolic process"/>
    <property type="evidence" value="ECO:0000303"/>
    <property type="project" value="ComplexPortal"/>
</dbReference>
<dbReference type="GO" id="GO:0071038">
    <property type="term" value="P:TRAMP-dependent tRNA surveillance pathway"/>
    <property type="evidence" value="ECO:0000314"/>
    <property type="project" value="SGD"/>
</dbReference>
<dbReference type="GO" id="GO:0006400">
    <property type="term" value="P:tRNA modification"/>
    <property type="evidence" value="ECO:0000315"/>
    <property type="project" value="SGD"/>
</dbReference>
<dbReference type="DisProt" id="DP02464"/>
<dbReference type="FunFam" id="4.10.60.10:FF:000067">
    <property type="entry name" value="Air2p"/>
    <property type="match status" value="1"/>
</dbReference>
<dbReference type="Gene3D" id="4.10.60.10">
    <property type="entry name" value="Zinc finger, CCHC-type"/>
    <property type="match status" value="2"/>
</dbReference>
<dbReference type="InterPro" id="IPR016713">
    <property type="entry name" value="Air1/2_Saccharomycetales"/>
</dbReference>
<dbReference type="InterPro" id="IPR049024">
    <property type="entry name" value="AIR2-like_ZnK4"/>
</dbReference>
<dbReference type="InterPro" id="IPR051644">
    <property type="entry name" value="TRAMP_AT-DNA-binding"/>
</dbReference>
<dbReference type="InterPro" id="IPR001878">
    <property type="entry name" value="Znf_CCHC"/>
</dbReference>
<dbReference type="InterPro" id="IPR036875">
    <property type="entry name" value="Znf_CCHC_sf"/>
</dbReference>
<dbReference type="PANTHER" id="PTHR46543">
    <property type="entry name" value="ZINC FINGER CCHC DOMAIN-CONTAINING PROTEIN 7"/>
    <property type="match status" value="1"/>
</dbReference>
<dbReference type="PANTHER" id="PTHR46543:SF1">
    <property type="entry name" value="ZINC FINGER CCHC DOMAIN-CONTAINING PROTEIN 7"/>
    <property type="match status" value="1"/>
</dbReference>
<dbReference type="Pfam" id="PF21759">
    <property type="entry name" value="AIR2-like_ZnK4"/>
    <property type="match status" value="1"/>
</dbReference>
<dbReference type="Pfam" id="PF00098">
    <property type="entry name" value="zf-CCHC"/>
    <property type="match status" value="3"/>
</dbReference>
<dbReference type="PIRSF" id="PIRSF018162">
    <property type="entry name" value="PolyA_pol_Air1/2"/>
    <property type="match status" value="1"/>
</dbReference>
<dbReference type="SMART" id="SM00343">
    <property type="entry name" value="ZnF_C2HC"/>
    <property type="match status" value="5"/>
</dbReference>
<dbReference type="SUPFAM" id="SSF57756">
    <property type="entry name" value="Retrovirus zinc finger-like domains"/>
    <property type="match status" value="3"/>
</dbReference>
<dbReference type="PROSITE" id="PS50158">
    <property type="entry name" value="ZF_CCHC"/>
    <property type="match status" value="3"/>
</dbReference>
<comment type="function">
    <text evidence="3 6 7 8 9">Component of the TRAMP (TRF4) complex which has a poly(A) RNA polymerase activity and is involved in a post-transcriptional quality control mechanism limiting inappropriate expression of genetic information. Polyadenylation is required for the degradative activity of the exosome on several of its nuclear RNA substrates like cryptic transcripts generated by RNA polymerase II and III, or hypomethylated pre-tRNAi-Met. Both complexes polyadenylate RNA processing and degradation intermediates of snRNAs, snoRNAs and mRNAs that accumulate in strains lacking a functional exosome. AIR2 also inhibits the methylation of NPL3 mediated by HMT1 through its interaction with HMT1.</text>
</comment>
<comment type="subunit">
    <text evidence="3 6 7 8 9">Component of the TRAMP complex (also called TRF4 complex) composed of at least HUL4, MTR4, PAP2/TRF4 and either AIR1 or AIR2. Interacts with HMT1 and NPL3. The interaction with NPL3 requires the presence of HMT1. Interacts directly with PAP2.</text>
</comment>
<comment type="interaction">
    <interactant intactId="EBI-31475">
        <id>Q12476</id>
    </interactant>
    <interactant intactId="EBI-11592">
        <id>P47047</id>
        <label>MTR4</label>
    </interactant>
    <organismsDiffer>false</organismsDiffer>
    <experiments>8</experiments>
</comment>
<comment type="interaction">
    <interactant intactId="EBI-31475">
        <id>Q12476</id>
    </interactant>
    <interactant intactId="EBI-19517">
        <id>P53632</id>
        <label>PAP2</label>
    </interactant>
    <organismsDiffer>false</organismsDiffer>
    <experiments>22</experiments>
</comment>
<comment type="subcellular location">
    <subcellularLocation>
        <location evidence="4">Nucleus</location>
    </subcellularLocation>
</comment>
<comment type="miscellaneous">
    <text evidence="5">Present with 1800 molecules/cell in log phase SD medium.</text>
</comment>
<comment type="similarity">
    <text evidence="10">Belongs to the AIR1 family.</text>
</comment>
<name>AIR2_YEAST</name>
<proteinExistence type="evidence at protein level"/>
<reference key="1">
    <citation type="journal article" date="1997" name="Nature">
        <title>The nucleotide sequence of Saccharomyces cerevisiae chromosome IV.</title>
        <authorList>
            <person name="Jacq C."/>
            <person name="Alt-Moerbe J."/>
            <person name="Andre B."/>
            <person name="Arnold W."/>
            <person name="Bahr A."/>
            <person name="Ballesta J.P.G."/>
            <person name="Bargues M."/>
            <person name="Baron L."/>
            <person name="Becker A."/>
            <person name="Biteau N."/>
            <person name="Bloecker H."/>
            <person name="Blugeon C."/>
            <person name="Boskovic J."/>
            <person name="Brandt P."/>
            <person name="Brueckner M."/>
            <person name="Buitrago M.J."/>
            <person name="Coster F."/>
            <person name="Delaveau T."/>
            <person name="del Rey F."/>
            <person name="Dujon B."/>
            <person name="Eide L.G."/>
            <person name="Garcia-Cantalejo J.M."/>
            <person name="Goffeau A."/>
            <person name="Gomez-Peris A."/>
            <person name="Granotier C."/>
            <person name="Hanemann V."/>
            <person name="Hankeln T."/>
            <person name="Hoheisel J.D."/>
            <person name="Jaeger W."/>
            <person name="Jimenez A."/>
            <person name="Jonniaux J.-L."/>
            <person name="Kraemer C."/>
            <person name="Kuester H."/>
            <person name="Laamanen P."/>
            <person name="Legros Y."/>
            <person name="Louis E.J."/>
            <person name="Moeller-Rieker S."/>
            <person name="Monnet A."/>
            <person name="Moro M."/>
            <person name="Mueller-Auer S."/>
            <person name="Nussbaumer B."/>
            <person name="Paricio N."/>
            <person name="Paulin L."/>
            <person name="Perea J."/>
            <person name="Perez-Alonso M."/>
            <person name="Perez-Ortin J.E."/>
            <person name="Pohl T.M."/>
            <person name="Prydz H."/>
            <person name="Purnelle B."/>
            <person name="Rasmussen S.W."/>
            <person name="Remacha M.A."/>
            <person name="Revuelta J.L."/>
            <person name="Rieger M."/>
            <person name="Salom D."/>
            <person name="Saluz H.P."/>
            <person name="Saiz J.E."/>
            <person name="Saren A.-M."/>
            <person name="Schaefer M."/>
            <person name="Scharfe M."/>
            <person name="Schmidt E.R."/>
            <person name="Schneider C."/>
            <person name="Scholler P."/>
            <person name="Schwarz S."/>
            <person name="Soler-Mira A."/>
            <person name="Urrestarazu L.A."/>
            <person name="Verhasselt P."/>
            <person name="Vissers S."/>
            <person name="Voet M."/>
            <person name="Volckaert G."/>
            <person name="Wagner G."/>
            <person name="Wambutt R."/>
            <person name="Wedler E."/>
            <person name="Wedler H."/>
            <person name="Woelfl S."/>
            <person name="Harris D.E."/>
            <person name="Bowman S."/>
            <person name="Brown D."/>
            <person name="Churcher C.M."/>
            <person name="Connor R."/>
            <person name="Dedman K."/>
            <person name="Gentles S."/>
            <person name="Hamlin N."/>
            <person name="Hunt S."/>
            <person name="Jones L."/>
            <person name="McDonald S."/>
            <person name="Murphy L.D."/>
            <person name="Niblett D."/>
            <person name="Odell C."/>
            <person name="Oliver K."/>
            <person name="Rajandream M.A."/>
            <person name="Richards C."/>
            <person name="Shore L."/>
            <person name="Walsh S.V."/>
            <person name="Barrell B.G."/>
            <person name="Dietrich F.S."/>
            <person name="Mulligan J.T."/>
            <person name="Allen E."/>
            <person name="Araujo R."/>
            <person name="Aviles E."/>
            <person name="Berno A."/>
            <person name="Carpenter J."/>
            <person name="Chen E."/>
            <person name="Cherry J.M."/>
            <person name="Chung E."/>
            <person name="Duncan M."/>
            <person name="Hunicke-Smith S."/>
            <person name="Hyman R.W."/>
            <person name="Komp C."/>
            <person name="Lashkari D."/>
            <person name="Lew H."/>
            <person name="Lin D."/>
            <person name="Mosedale D."/>
            <person name="Nakahara K."/>
            <person name="Namath A."/>
            <person name="Oefner P."/>
            <person name="Oh C."/>
            <person name="Petel F.X."/>
            <person name="Roberts D."/>
            <person name="Schramm S."/>
            <person name="Schroeder M."/>
            <person name="Shogren T."/>
            <person name="Shroff N."/>
            <person name="Winant A."/>
            <person name="Yelton M.A."/>
            <person name="Botstein D."/>
            <person name="Davis R.W."/>
            <person name="Johnston M."/>
            <person name="Andrews S."/>
            <person name="Brinkman R."/>
            <person name="Cooper J."/>
            <person name="Ding H."/>
            <person name="Du Z."/>
            <person name="Favello A."/>
            <person name="Fulton L."/>
            <person name="Gattung S."/>
            <person name="Greco T."/>
            <person name="Hallsworth K."/>
            <person name="Hawkins J."/>
            <person name="Hillier L.W."/>
            <person name="Jier M."/>
            <person name="Johnson D."/>
            <person name="Johnston L."/>
            <person name="Kirsten J."/>
            <person name="Kucaba T."/>
            <person name="Langston Y."/>
            <person name="Latreille P."/>
            <person name="Le T."/>
            <person name="Mardis E."/>
            <person name="Menezes S."/>
            <person name="Miller N."/>
            <person name="Nhan M."/>
            <person name="Pauley A."/>
            <person name="Peluso D."/>
            <person name="Rifkin L."/>
            <person name="Riles L."/>
            <person name="Taich A."/>
            <person name="Trevaskis E."/>
            <person name="Vignati D."/>
            <person name="Wilcox L."/>
            <person name="Wohldman P."/>
            <person name="Vaudin M."/>
            <person name="Wilson R."/>
            <person name="Waterston R."/>
            <person name="Albermann K."/>
            <person name="Hani J."/>
            <person name="Heumann K."/>
            <person name="Kleine K."/>
            <person name="Mewes H.-W."/>
            <person name="Zollner A."/>
            <person name="Zaccaria P."/>
        </authorList>
    </citation>
    <scope>NUCLEOTIDE SEQUENCE [LARGE SCALE GENOMIC DNA]</scope>
    <source>
        <strain>ATCC 204508 / S288c</strain>
    </source>
</reference>
<reference key="2">
    <citation type="journal article" date="2014" name="G3 (Bethesda)">
        <title>The reference genome sequence of Saccharomyces cerevisiae: Then and now.</title>
        <authorList>
            <person name="Engel S.R."/>
            <person name="Dietrich F.S."/>
            <person name="Fisk D.G."/>
            <person name="Binkley G."/>
            <person name="Balakrishnan R."/>
            <person name="Costanzo M.C."/>
            <person name="Dwight S.S."/>
            <person name="Hitz B.C."/>
            <person name="Karra K."/>
            <person name="Nash R.S."/>
            <person name="Weng S."/>
            <person name="Wong E.D."/>
            <person name="Lloyd P."/>
            <person name="Skrzypek M.S."/>
            <person name="Miyasato S.R."/>
            <person name="Simison M."/>
            <person name="Cherry J.M."/>
        </authorList>
    </citation>
    <scope>GENOME REANNOTATION</scope>
    <source>
        <strain>ATCC 204508 / S288c</strain>
    </source>
</reference>
<reference key="3">
    <citation type="journal article" date="2000" name="J. Biol. Chem.">
        <title>Novel RING finger proteins, Air1p and Air2p, interact with Hmt1p and inhibit the arginine methylation of Npl3p.</title>
        <authorList>
            <person name="Inoue K."/>
            <person name="Mizuno T."/>
            <person name="Wada K."/>
            <person name="Hagiwara M."/>
        </authorList>
    </citation>
    <scope>FUNCTION</scope>
    <scope>INTERACTION WITH HMT1 AND NPL3</scope>
</reference>
<reference key="4">
    <citation type="journal article" date="2003" name="Nature">
        <title>Global analysis of protein localization in budding yeast.</title>
        <authorList>
            <person name="Huh W.-K."/>
            <person name="Falvo J.V."/>
            <person name="Gerke L.C."/>
            <person name="Carroll A.S."/>
            <person name="Howson R.W."/>
            <person name="Weissman J.S."/>
            <person name="O'Shea E.K."/>
        </authorList>
    </citation>
    <scope>SUBCELLULAR LOCATION [LARGE SCALE ANALYSIS]</scope>
</reference>
<reference key="5">
    <citation type="journal article" date="2003" name="Nature">
        <title>Global analysis of protein expression in yeast.</title>
        <authorList>
            <person name="Ghaemmaghami S."/>
            <person name="Huh W.-K."/>
            <person name="Bower K."/>
            <person name="Howson R.W."/>
            <person name="Belle A."/>
            <person name="Dephoure N."/>
            <person name="O'Shea E.K."/>
            <person name="Weissman J.S."/>
        </authorList>
    </citation>
    <scope>LEVEL OF PROTEIN EXPRESSION [LARGE SCALE ANALYSIS]</scope>
</reference>
<reference key="6">
    <citation type="journal article" date="2005" name="Cell">
        <title>RNA degradation by the exosome is promoted by a nuclear polyadenylation complex.</title>
        <authorList>
            <person name="LaCava J."/>
            <person name="Houseley J."/>
            <person name="Saveanu C."/>
            <person name="Petfalski E."/>
            <person name="Thompson E."/>
            <person name="Jacquier A."/>
            <person name="Tollervey D."/>
        </authorList>
    </citation>
    <scope>IDENTIFICATION IN TRAMP COMPLEX</scope>
    <scope>FUNCTION OF THE TRAMP COMPLEX</scope>
</reference>
<reference key="7">
    <citation type="journal article" date="2005" name="Cell">
        <title>Cryptic pol II transcripts are degraded by a nuclear quality control pathway involving a new poly(A) polymerase.</title>
        <authorList>
            <person name="Wyers F."/>
            <person name="Rougemaille M."/>
            <person name="Badis G."/>
            <person name="Rousselle J.-C."/>
            <person name="Dufour M.-E."/>
            <person name="Boulay J."/>
            <person name="Regnault B."/>
            <person name="Devaux F."/>
            <person name="Namane A."/>
            <person name="Seraphin B."/>
            <person name="Libri D."/>
            <person name="Jacquier A."/>
        </authorList>
    </citation>
    <scope>IDENTIFICATION IN THE TRF4 COMPLEX</scope>
    <scope>IDENTIFICATION BY MASS SPECTROMETRY</scope>
    <scope>FUNCTION OF THE TRF4 COMPLEX</scope>
</reference>
<reference key="8">
    <citation type="journal article" date="2005" name="PLoS Biol.">
        <title>A new yeast poly(A) polymerase complex involved in RNA quality control.</title>
        <authorList>
            <person name="Vanacova S."/>
            <person name="Wolf J."/>
            <person name="Martin G."/>
            <person name="Blank D."/>
            <person name="Dettwiler S."/>
            <person name="Friedlein A."/>
            <person name="Langen H."/>
            <person name="Keith G."/>
            <person name="Keller W."/>
        </authorList>
    </citation>
    <scope>IDENTIFICATION IN THE TRF4 COMPLEX</scope>
    <scope>IDENTIFICATION BY MASS SPECTROMETRY</scope>
    <scope>FUNCTION OF THE TRF4 COMPLEX</scope>
</reference>
<reference key="9">
    <citation type="journal article" date="2007" name="J. Proteome Res.">
        <title>Large-scale phosphorylation analysis of alpha-factor-arrested Saccharomyces cerevisiae.</title>
        <authorList>
            <person name="Li X."/>
            <person name="Gerber S.A."/>
            <person name="Rudner A.D."/>
            <person name="Beausoleil S.A."/>
            <person name="Haas W."/>
            <person name="Villen J."/>
            <person name="Elias J.E."/>
            <person name="Gygi S.P."/>
        </authorList>
    </citation>
    <scope>PHOSPHORYLATION [LARGE SCALE ANALYSIS] AT SER-49</scope>
    <scope>IDENTIFICATION BY MASS SPECTROMETRY [LARGE SCALE ANALYSIS]</scope>
    <source>
        <strain>ADR376</strain>
    </source>
</reference>
<reference key="10">
    <citation type="journal article" date="2008" name="Mol. Cell. Proteomics">
        <title>A multidimensional chromatography technology for in-depth phosphoproteome analysis.</title>
        <authorList>
            <person name="Albuquerque C.P."/>
            <person name="Smolka M.B."/>
            <person name="Payne S.H."/>
            <person name="Bafna V."/>
            <person name="Eng J."/>
            <person name="Zhou H."/>
        </authorList>
    </citation>
    <scope>PHOSPHORYLATION [LARGE SCALE ANALYSIS] AT SER-31 AND SER-49</scope>
    <scope>IDENTIFICATION BY MASS SPECTROMETRY [LARGE SCALE ANALYSIS]</scope>
</reference>
<reference key="11">
    <citation type="journal article" date="2009" name="Science">
        <title>Global analysis of Cdk1 substrate phosphorylation sites provides insights into evolution.</title>
        <authorList>
            <person name="Holt L.J."/>
            <person name="Tuch B.B."/>
            <person name="Villen J."/>
            <person name="Johnson A.D."/>
            <person name="Gygi S.P."/>
            <person name="Morgan D.O."/>
        </authorList>
    </citation>
    <scope>PHOSPHORYLATION [LARGE SCALE ANALYSIS] AT SER-49</scope>
    <scope>IDENTIFICATION BY MASS SPECTROMETRY [LARGE SCALE ANALYSIS]</scope>
</reference>
<reference key="12">
    <citation type="journal article" date="2010" name="Proc. Natl. Acad. Sci. U.S.A.">
        <title>Structure and function of the polymerase core of TRAMP, a RNA surveillance complex.</title>
        <authorList>
            <person name="Hamill S."/>
            <person name="Wolin S.L."/>
            <person name="Reinisch K.M."/>
        </authorList>
    </citation>
    <scope>X-RAY CRYSTALLOGRAPHY (2.7 ANGSTROMS) OF 118-198 IN COMPLEX WITH PAP2 AND ZINC IONS</scope>
    <scope>FUNCTION</scope>
    <scope>INTERACTION WITH PAP2</scope>
</reference>
<accession>Q12476</accession>
<accession>D6VRH7</accession>
<keyword id="KW-0002">3D-structure</keyword>
<keyword id="KW-0479">Metal-binding</keyword>
<keyword id="KW-0539">Nucleus</keyword>
<keyword id="KW-0597">Phosphoprotein</keyword>
<keyword id="KW-1185">Reference proteome</keyword>
<keyword id="KW-0677">Repeat</keyword>
<keyword id="KW-0862">Zinc</keyword>
<keyword id="KW-0863">Zinc-finger</keyword>
<gene>
    <name type="primary">AIR2</name>
    <name type="ordered locus">YDL175C</name>
</gene>